<proteinExistence type="evidence at protein level"/>
<comment type="function">
    <text>Required for invasion of epithelial cells. Could be involved in protein secretion.</text>
</comment>
<comment type="subcellular location">
    <subcellularLocation>
        <location evidence="3">Cell outer membrane</location>
        <topology evidence="3">Lipid-anchor</topology>
    </subcellularLocation>
</comment>
<comment type="similarity">
    <text evidence="3">Belongs to the YscJ lipoprotein family.</text>
</comment>
<keyword id="KW-0002">3D-structure</keyword>
<keyword id="KW-0998">Cell outer membrane</keyword>
<keyword id="KW-0449">Lipoprotein</keyword>
<keyword id="KW-0472">Membrane</keyword>
<keyword id="KW-0564">Palmitate</keyword>
<keyword id="KW-0653">Protein transport</keyword>
<keyword id="KW-1185">Reference proteome</keyword>
<keyword id="KW-0732">Signal</keyword>
<keyword id="KW-0812">Transmembrane</keyword>
<keyword id="KW-1133">Transmembrane helix</keyword>
<keyword id="KW-0813">Transport</keyword>
<keyword id="KW-0843">Virulence</keyword>
<dbReference type="EMBL" id="U21676">
    <property type="protein sequence ID" value="AAB60191.1"/>
    <property type="molecule type" value="Genomic_DNA"/>
</dbReference>
<dbReference type="EMBL" id="AE006468">
    <property type="protein sequence ID" value="AAL21751.1"/>
    <property type="molecule type" value="Genomic_DNA"/>
</dbReference>
<dbReference type="PIR" id="S69786">
    <property type="entry name" value="S69786"/>
</dbReference>
<dbReference type="RefSeq" id="NP_461792.1">
    <property type="nucleotide sequence ID" value="NC_003197.2"/>
</dbReference>
<dbReference type="RefSeq" id="WP_000621238.1">
    <property type="nucleotide sequence ID" value="NC_003197.2"/>
</dbReference>
<dbReference type="PDB" id="2Y9J">
    <property type="method" value="EM"/>
    <property type="resolution" value="6.40 A"/>
    <property type="chains" value="Y/Z/a/b/c/d/e/f/g/h/i/j/k/l/m/n/o/p/q/r/s/t/u/v=21-190"/>
</dbReference>
<dbReference type="PDB" id="3J6D">
    <property type="method" value="EM"/>
    <property type="chains" value="Y/Z/a/b/c/d/e/f/g/h/i/j/k/l/m/n/o/p/q/r/s/t/u/v=1-252"/>
</dbReference>
<dbReference type="PDB" id="4OYC">
    <property type="method" value="X-ray"/>
    <property type="resolution" value="2.60 A"/>
    <property type="chains" value="A/B=96-200"/>
</dbReference>
<dbReference type="PDB" id="4W4M">
    <property type="method" value="X-ray"/>
    <property type="resolution" value="3.20 A"/>
    <property type="chains" value="A/B/C/D/E/F/G/H/I/J/K/L/M/N=19-92"/>
</dbReference>
<dbReference type="PDB" id="5TCP">
    <property type="method" value="EM"/>
    <property type="resolution" value="4.30 A"/>
    <property type="chains" value="0/2/4/6/8/B/D/F/H/J/L/N/P/R/T/V/X/Z/a/c/e/g/i/k=18-252"/>
</dbReference>
<dbReference type="PDB" id="5TCR">
    <property type="method" value="EM"/>
    <property type="resolution" value="6.30 A"/>
    <property type="chains" value="1/3/5/7/9/P/R/T/V/X/a/c/e/g/i/k/m/o/q/s/u/w/y/z=18-252"/>
</dbReference>
<dbReference type="PDB" id="6DUZ">
    <property type="method" value="EM"/>
    <property type="resolution" value="3.60 A"/>
    <property type="chains" value="Y/Z/a/b/c/d/e/f/g/h/i/j/k/l/m/n/o/p/q/r/s/t/u/v=1-252"/>
</dbReference>
<dbReference type="PDB" id="6PEM">
    <property type="method" value="EM"/>
    <property type="resolution" value="3.50 A"/>
    <property type="chains" value="AA/AB/AC/AD/AE/AF/AG/AH/AI/AJ/AK/AL/o/p/q/r/s/t/u/v/w/x/y/z=1-252"/>
</dbReference>
<dbReference type="PDB" id="6Q14">
    <property type="method" value="EM"/>
    <property type="resolution" value="3.80 A"/>
    <property type="chains" value="AA/AB/AC/AD/AE/AF/AG/AH/AI/AJ/AK/AL/o/p/q/r/s/t/u/v/w/x/y/z=1-252"/>
</dbReference>
<dbReference type="PDB" id="6Q15">
    <property type="method" value="EM"/>
    <property type="resolution" value="5.15 A"/>
    <property type="chains" value="AA/AB/AC/AD/AE/AF/AG/AH/AI/AJ/AK/AL/o/p/q/r/s/t/u/v/w/x/y/z=1-252"/>
</dbReference>
<dbReference type="PDB" id="6Q16">
    <property type="method" value="EM"/>
    <property type="resolution" value="4.10 A"/>
    <property type="chains" value="AA/AB/AC/AD/AE/AF/AG/AH/AI/AJ/AK/AL/o/p/q/r/s/t/u/v/w/x/y/z=1-252"/>
</dbReference>
<dbReference type="PDB" id="6UOT">
    <property type="method" value="EM"/>
    <property type="resolution" value="3.30 A"/>
    <property type="chains" value="Y/Z/a/b/c/d/e/f/g/h/i/j/k/l/m/n/o/p/q/r/s/t/u/v=1-252"/>
</dbReference>
<dbReference type="PDB" id="6UOV">
    <property type="method" value="EM"/>
    <property type="resolution" value="3.50 A"/>
    <property type="chains" value="A/C/E/G/I/K/M/O/Q/S/U/W/Y/a/c/e/g/i/k/m/o/q/s=1-252"/>
</dbReference>
<dbReference type="PDB" id="7AH9">
    <property type="method" value="EM"/>
    <property type="resolution" value="3.30 A"/>
    <property type="chains" value="6A/6B/6C/6D/6E/6F/6G/6H/6I/6J/6K/6L/6M/6N/6O/6P/6Q/6R/6S/6T/6U/6V/6W/6X=1-252"/>
</dbReference>
<dbReference type="PDB" id="7AHI">
    <property type="method" value="EM"/>
    <property type="resolution" value="3.30 A"/>
    <property type="chains" value="6A/6B/6C/6D/6E/6F/6G/6H/6I/6J/6K/6L/6M/6N/6O/6P/6Q/6R/6S/6T/6U/6V/6W/6X=1-252"/>
</dbReference>
<dbReference type="PDBsum" id="2Y9J"/>
<dbReference type="PDBsum" id="3J6D"/>
<dbReference type="PDBsum" id="4OYC"/>
<dbReference type="PDBsum" id="4W4M"/>
<dbReference type="PDBsum" id="5TCP"/>
<dbReference type="PDBsum" id="5TCR"/>
<dbReference type="PDBsum" id="6DUZ"/>
<dbReference type="PDBsum" id="6PEM"/>
<dbReference type="PDBsum" id="6Q14"/>
<dbReference type="PDBsum" id="6Q15"/>
<dbReference type="PDBsum" id="6Q16"/>
<dbReference type="PDBsum" id="6UOT"/>
<dbReference type="PDBsum" id="6UOV"/>
<dbReference type="PDBsum" id="7AH9"/>
<dbReference type="PDBsum" id="7AHI"/>
<dbReference type="BMRB" id="P41786"/>
<dbReference type="EMDB" id="EMD-11781"/>
<dbReference type="EMDB" id="EMD-20556"/>
<dbReference type="EMDB" id="EMD-20832"/>
<dbReference type="EMDB" id="EMD-20833"/>
<dbReference type="EMDB" id="EMD-8398"/>
<dbReference type="EMDB" id="EMD-8400"/>
<dbReference type="EMDB" id="EMD-8913"/>
<dbReference type="SMR" id="P41786"/>
<dbReference type="DIP" id="DIP-59554N"/>
<dbReference type="IntAct" id="P41786">
    <property type="interactions" value="2"/>
</dbReference>
<dbReference type="STRING" id="99287.STM2871"/>
<dbReference type="TCDB" id="3.A.6.1.3">
    <property type="family name" value="the type iii (virulence-related) secretory pathway (iiisp) family"/>
</dbReference>
<dbReference type="PaxDb" id="99287-STM2871"/>
<dbReference type="GeneID" id="1254394"/>
<dbReference type="KEGG" id="stm:STM2871"/>
<dbReference type="PATRIC" id="fig|99287.12.peg.3027"/>
<dbReference type="HOGENOM" id="CLU_073268_2_0_6"/>
<dbReference type="OMA" id="MSIATCW"/>
<dbReference type="PhylomeDB" id="P41786"/>
<dbReference type="BioCyc" id="SENT99287:STM2871-MONOMER"/>
<dbReference type="EvolutionaryTrace" id="P41786"/>
<dbReference type="Proteomes" id="UP000001014">
    <property type="component" value="Chromosome"/>
</dbReference>
<dbReference type="GO" id="GO:0009279">
    <property type="term" value="C:cell outer membrane"/>
    <property type="evidence" value="ECO:0007669"/>
    <property type="project" value="UniProtKB-SubCell"/>
</dbReference>
<dbReference type="GO" id="GO:0009306">
    <property type="term" value="P:protein secretion"/>
    <property type="evidence" value="ECO:0007669"/>
    <property type="project" value="InterPro"/>
</dbReference>
<dbReference type="Gene3D" id="3.30.300.30">
    <property type="match status" value="1"/>
</dbReference>
<dbReference type="Gene3D" id="3.30.70.1530">
    <property type="entry name" value="Hypothetical protein rpa1041"/>
    <property type="match status" value="1"/>
</dbReference>
<dbReference type="InterPro" id="IPR045851">
    <property type="entry name" value="AMP-bd_C_sf"/>
</dbReference>
<dbReference type="InterPro" id="IPR006182">
    <property type="entry name" value="FliF_N_dom"/>
</dbReference>
<dbReference type="InterPro" id="IPR003282">
    <property type="entry name" value="T3SS_SctJ"/>
</dbReference>
<dbReference type="InterPro" id="IPR043427">
    <property type="entry name" value="YscJ/FliF"/>
</dbReference>
<dbReference type="NCBIfam" id="TIGR02544">
    <property type="entry name" value="III_secr_YscJ"/>
    <property type="match status" value="1"/>
</dbReference>
<dbReference type="NCBIfam" id="NF011852">
    <property type="entry name" value="PRK15324.1"/>
    <property type="match status" value="1"/>
</dbReference>
<dbReference type="PANTHER" id="PTHR30046">
    <property type="entry name" value="FLAGELLAR M-RING PROTEIN"/>
    <property type="match status" value="1"/>
</dbReference>
<dbReference type="PANTHER" id="PTHR30046:SF3">
    <property type="entry name" value="SECRETION SYSTEM APPARATUS LIPOPROTEIN SSAJ"/>
    <property type="match status" value="1"/>
</dbReference>
<dbReference type="Pfam" id="PF01514">
    <property type="entry name" value="YscJ_FliF"/>
    <property type="match status" value="1"/>
</dbReference>
<dbReference type="PRINTS" id="PR01338">
    <property type="entry name" value="TYPE3OMKPROT"/>
</dbReference>
<dbReference type="PROSITE" id="PS51257">
    <property type="entry name" value="PROKAR_LIPOPROTEIN"/>
    <property type="match status" value="1"/>
</dbReference>
<reference key="1">
    <citation type="journal article" date="1995" name="Mol. Microbiol.">
        <title>PhoP/PhoQ transcriptional repression of Salmonella typhimurium invasion genes: evidence for a role in protein secretion.</title>
        <authorList>
            <person name="Pegues D.A."/>
            <person name="Hantman M.J."/>
            <person name="Behlau I."/>
            <person name="Miller S.I."/>
        </authorList>
    </citation>
    <scope>NUCLEOTIDE SEQUENCE [GENOMIC DNA]</scope>
    <source>
        <strain>ATCC 14028s / SGSG 2262</strain>
    </source>
</reference>
<reference key="2">
    <citation type="journal article" date="2001" name="Nature">
        <title>Complete genome sequence of Salmonella enterica serovar Typhimurium LT2.</title>
        <authorList>
            <person name="McClelland M."/>
            <person name="Sanderson K.E."/>
            <person name="Spieth J."/>
            <person name="Clifton S.W."/>
            <person name="Latreille P."/>
            <person name="Courtney L."/>
            <person name="Porwollik S."/>
            <person name="Ali J."/>
            <person name="Dante M."/>
            <person name="Du F."/>
            <person name="Hou S."/>
            <person name="Layman D."/>
            <person name="Leonard S."/>
            <person name="Nguyen C."/>
            <person name="Scott K."/>
            <person name="Holmes A."/>
            <person name="Grewal N."/>
            <person name="Mulvaney E."/>
            <person name="Ryan E."/>
            <person name="Sun H."/>
            <person name="Florea L."/>
            <person name="Miller W."/>
            <person name="Stoneking T."/>
            <person name="Nhan M."/>
            <person name="Waterston R."/>
            <person name="Wilson R.K."/>
        </authorList>
    </citation>
    <scope>NUCLEOTIDE SEQUENCE [LARGE SCALE GENOMIC DNA]</scope>
    <source>
        <strain>LT2 / SGSC1412 / ATCC 700720</strain>
    </source>
</reference>
<name>PRGK_SALTY</name>
<organism>
    <name type="scientific">Salmonella typhimurium (strain LT2 / SGSC1412 / ATCC 700720)</name>
    <dbReference type="NCBI Taxonomy" id="99287"/>
    <lineage>
        <taxon>Bacteria</taxon>
        <taxon>Pseudomonadati</taxon>
        <taxon>Pseudomonadota</taxon>
        <taxon>Gammaproteobacteria</taxon>
        <taxon>Enterobacterales</taxon>
        <taxon>Enterobacteriaceae</taxon>
        <taxon>Salmonella</taxon>
    </lineage>
</organism>
<protein>
    <recommendedName>
        <fullName>Lipoprotein PrgK</fullName>
    </recommendedName>
</protein>
<feature type="signal peptide" evidence="2">
    <location>
        <begin position="1"/>
        <end position="17"/>
    </location>
</feature>
<feature type="chain" id="PRO_0000018182" description="Lipoprotein PrgK">
    <location>
        <begin position="18"/>
        <end position="252"/>
    </location>
</feature>
<feature type="transmembrane region" description="Helical" evidence="1">
    <location>
        <begin position="207"/>
        <end position="227"/>
    </location>
</feature>
<feature type="lipid moiety-binding region" description="N-palmitoyl cysteine" evidence="2">
    <location>
        <position position="18"/>
    </location>
</feature>
<feature type="lipid moiety-binding region" description="S-diacylglycerol cysteine" evidence="2">
    <location>
        <position position="18"/>
    </location>
</feature>
<feature type="strand" evidence="5">
    <location>
        <begin position="20"/>
        <end position="27"/>
    </location>
</feature>
<feature type="helix" evidence="5">
    <location>
        <begin position="29"/>
        <end position="40"/>
    </location>
</feature>
<feature type="turn" evidence="5">
    <location>
        <begin position="41"/>
        <end position="43"/>
    </location>
</feature>
<feature type="strand" evidence="5">
    <location>
        <begin position="47"/>
        <end position="50"/>
    </location>
</feature>
<feature type="helix" evidence="5">
    <location>
        <begin position="52"/>
        <end position="54"/>
    </location>
</feature>
<feature type="strand" evidence="5">
    <location>
        <begin position="56"/>
        <end position="61"/>
    </location>
</feature>
<feature type="helix" evidence="5">
    <location>
        <begin position="62"/>
        <end position="64"/>
    </location>
</feature>
<feature type="helix" evidence="5">
    <location>
        <begin position="65"/>
        <end position="74"/>
    </location>
</feature>
<feature type="helix" evidence="6">
    <location>
        <begin position="85"/>
        <end position="87"/>
    </location>
</feature>
<feature type="strand" evidence="6">
    <location>
        <begin position="93"/>
        <end position="95"/>
    </location>
</feature>
<feature type="helix" evidence="4">
    <location>
        <begin position="98"/>
        <end position="117"/>
    </location>
</feature>
<feature type="strand" evidence="7">
    <location>
        <begin position="120"/>
        <end position="122"/>
    </location>
</feature>
<feature type="strand" evidence="4">
    <location>
        <begin position="123"/>
        <end position="131"/>
    </location>
</feature>
<feature type="turn" evidence="6">
    <location>
        <begin position="136"/>
        <end position="138"/>
    </location>
</feature>
<feature type="strand" evidence="4">
    <location>
        <begin position="147"/>
        <end position="154"/>
    </location>
</feature>
<feature type="helix" evidence="4">
    <location>
        <begin position="160"/>
        <end position="174"/>
    </location>
</feature>
<feature type="strand" evidence="6">
    <location>
        <begin position="175"/>
        <end position="177"/>
    </location>
</feature>
<feature type="helix" evidence="4">
    <location>
        <begin position="180"/>
        <end position="182"/>
    </location>
</feature>
<feature type="strand" evidence="4">
    <location>
        <begin position="183"/>
        <end position="188"/>
    </location>
</feature>
<accession>P41786</accession>
<gene>
    <name type="primary">prgK</name>
    <name type="ordered locus">STM2871</name>
</gene>
<evidence type="ECO:0000255" key="1"/>
<evidence type="ECO:0000255" key="2">
    <source>
        <dbReference type="PROSITE-ProRule" id="PRU00303"/>
    </source>
</evidence>
<evidence type="ECO:0000305" key="3"/>
<evidence type="ECO:0007829" key="4">
    <source>
        <dbReference type="PDB" id="4OYC"/>
    </source>
</evidence>
<evidence type="ECO:0007829" key="5">
    <source>
        <dbReference type="PDB" id="4W4M"/>
    </source>
</evidence>
<evidence type="ECO:0007829" key="6">
    <source>
        <dbReference type="PDB" id="6UOT"/>
    </source>
</evidence>
<evidence type="ECO:0007829" key="7">
    <source>
        <dbReference type="PDB" id="6UOV"/>
    </source>
</evidence>
<sequence>MIRRYLYTFLLVMTLAGCKDKDLLKGLDQEQANEVIAVLQMHNIEANKIDSGKLGYSITVAEPDFTAAVYWIKTYQLPPRPRVEIAQMFPADSLVSSPRAEKARLYSAIEQRLEQSLQTMEGVLSARVHISYDIDAGENGRPPKPVHLSALAVYERGSPLAHQISDIKRFLKNSFADVDYDNISVVLSERSDAQLQAPGTPVKRNSFATSWIVLIILLSVMSAGFGVWYYKNHYARNKKGITADDKAKSSNE</sequence>